<dbReference type="EMBL" id="BC053499">
    <property type="protein sequence ID" value="AAH53499.1"/>
    <property type="status" value="ALT_SEQ"/>
    <property type="molecule type" value="mRNA"/>
</dbReference>
<dbReference type="EMBL" id="DY654993">
    <property type="status" value="NOT_ANNOTATED_CDS"/>
    <property type="molecule type" value="mRNA"/>
</dbReference>
<dbReference type="EMBL" id="DY654994">
    <property type="status" value="NOT_ANNOTATED_CDS"/>
    <property type="molecule type" value="mRNA"/>
</dbReference>
<dbReference type="GlyGen" id="Q499Y3">
    <property type="glycosylation" value="1 site, 1 O-linked glycan (1 site)"/>
</dbReference>
<dbReference type="BioMuta" id="-"/>
<dbReference type="MassIVE" id="Q499Y3"/>
<dbReference type="PeptideAtlas" id="Q499Y3"/>
<dbReference type="AGR" id="HGNC:44080"/>
<dbReference type="neXtProt" id="NX_Q499Y3"/>
<dbReference type="InParanoid" id="Q499Y3"/>
<dbReference type="PAN-GO" id="Q499Y3">
    <property type="GO annotations" value="0 GO annotations based on evolutionary models"/>
</dbReference>
<dbReference type="PhylomeDB" id="Q499Y3"/>
<dbReference type="Pharos" id="Q499Y3">
    <property type="development level" value="Tdark"/>
</dbReference>
<dbReference type="Proteomes" id="UP000005640">
    <property type="component" value="Unplaced"/>
</dbReference>
<dbReference type="RNAct" id="Q499Y3">
    <property type="molecule type" value="protein"/>
</dbReference>
<dbReference type="InterPro" id="IPR028043">
    <property type="entry name" value="PAAT-like"/>
</dbReference>
<dbReference type="PANTHER" id="PTHR14787:SF1">
    <property type="entry name" value="ATPASE PAAT"/>
    <property type="match status" value="1"/>
</dbReference>
<dbReference type="PANTHER" id="PTHR14787">
    <property type="entry name" value="C10ORF188 FAMILY MEMBER"/>
    <property type="match status" value="1"/>
</dbReference>
<reference key="1">
    <citation type="journal article" date="2004" name="Genome Res.">
        <title>The status, quality, and expansion of the NIH full-length cDNA project: the Mammalian Gene Collection (MGC).</title>
        <authorList>
            <consortium name="The MGC Project Team"/>
        </authorList>
    </citation>
    <scope>NUCLEOTIDE SEQUENCE [LARGE SCALE MRNA] OF 1-165</scope>
    <source>
        <tissue>Testis</tissue>
    </source>
</reference>
<reference key="2">
    <citation type="submission" date="2006-03" db="EMBL/GenBank/DDBJ databases">
        <title>Exhaustive RT-PCR and sequencing of all novel TWINSCAN predictions in human.</title>
        <authorList>
            <person name="Stevens M."/>
            <person name="Wei C."/>
            <person name="Gross S.S."/>
            <person name="McPherson J."/>
            <person name="Brent M.R."/>
        </authorList>
    </citation>
    <scope>NUCLEOTIDE SEQUENCE [LARGE SCALE MRNA] OF 107-187</scope>
</reference>
<proteinExistence type="evidence at transcript level"/>
<evidence type="ECO:0000305" key="1"/>
<feature type="chain" id="PRO_0000348243" description="Putative uncharacterized protein C10orf88-like">
    <location>
        <begin position="1"/>
        <end position="187"/>
    </location>
</feature>
<name>YJ016_HUMAN</name>
<protein>
    <recommendedName>
        <fullName>Putative uncharacterized protein C10orf88-like</fullName>
    </recommendedName>
</protein>
<sequence>MRAVSANYSTGSPAVKSRIELDRIQTIMESMGSKLSPGAQQLINMVRFQQWNCIPIEEQLQLVLGNAGYKQMTGLQCSSALGALDKLSSTPFPFRTGLTSGNVTENLQAYIDKSTQASSGENSTKLDECKIVPQNHSLLENDLKNATSPFLPKKANDNSNIPNSELLPFLQNLCSQVNYLLVGRKAE</sequence>
<organism>
    <name type="scientific">Homo sapiens</name>
    <name type="common">Human</name>
    <dbReference type="NCBI Taxonomy" id="9606"/>
    <lineage>
        <taxon>Eukaryota</taxon>
        <taxon>Metazoa</taxon>
        <taxon>Chordata</taxon>
        <taxon>Craniata</taxon>
        <taxon>Vertebrata</taxon>
        <taxon>Euteleostomi</taxon>
        <taxon>Mammalia</taxon>
        <taxon>Eutheria</taxon>
        <taxon>Euarchontoglires</taxon>
        <taxon>Primates</taxon>
        <taxon>Haplorrhini</taxon>
        <taxon>Catarrhini</taxon>
        <taxon>Hominidae</taxon>
        <taxon>Homo</taxon>
    </lineage>
</organism>
<keyword id="KW-1185">Reference proteome</keyword>
<accession>Q499Y3</accession>
<comment type="sequence caution" evidence="1">
    <conflict type="miscellaneous discrepancy">
        <sequence resource="EMBL-CDS" id="AAH53499"/>
    </conflict>
    <text>Contaminating sequence. Potential poly-A sequence.</text>
</comment>